<reference key="1">
    <citation type="journal article" date="2000" name="Proc. Natl. Acad. Sci. U.S.A.">
        <title>Archaeal adaptation to higher temperatures revealed by genomic sequence of Thermoplasma volcanium.</title>
        <authorList>
            <person name="Kawashima T."/>
            <person name="Amano N."/>
            <person name="Koike H."/>
            <person name="Makino S."/>
            <person name="Higuchi S."/>
            <person name="Kawashima-Ohya Y."/>
            <person name="Watanabe K."/>
            <person name="Yamazaki M."/>
            <person name="Kanehori K."/>
            <person name="Kawamoto T."/>
            <person name="Nunoshiba T."/>
            <person name="Yamamoto Y."/>
            <person name="Aramaki H."/>
            <person name="Makino K."/>
            <person name="Suzuki M."/>
        </authorList>
    </citation>
    <scope>NUCLEOTIDE SEQUENCE [LARGE SCALE GENOMIC DNA]</scope>
    <source>
        <strain>ATCC 51530 / DSM 4299 / JCM 9571 / NBRC 15438 / GSS1</strain>
    </source>
</reference>
<evidence type="ECO:0000255" key="1">
    <source>
        <dbReference type="HAMAP-Rule" id="MF_00282"/>
    </source>
</evidence>
<sequence>MSEISKNEALILKYLASKNQEIEESNIEIKGLSRQDIASATSWLQVKGLIDVKTREEVAYVLTDEGKRYAENGLPELRAYSILKRKGKLSLRDLQEAMPDEYKIVLAQLAKFGITPKNGVLEYSDGHIEAEISRRQRFLSDLNTDDQEMIEHFKRRKNVIEEKKRSVRIVSINSKGLEQLNNFDQFEAIGEIDSGIITSQAWKTAPFRKYDLDAPVSPTKSYAKHPLVYFINEIRRIFLDMGFTEMSGHYIESALWDMDALFIPQDHPARDMQDTFYVKDSNFTIEHPEIEKRIKRIHERGFDGYSGWGYRWSSDDGKKLILRTHTTVTTARYLYEHNTYPQAIFSVEKVFRHESVDWKHLAEFYQIEGAVYDKNVSVATLKWILRTFYGKLGFEKIRLVPSYYPYTEPSLDVVVEVDGKEMELGGSGIFRPEVGKILGLKAPVMAWGMGLERLAMLYYGLTDVRDLYNTDFSFLEGYKIKY</sequence>
<name>SYFA_THEVO</name>
<feature type="chain" id="PRO_0000126823" description="Phenylalanine--tRNA ligase alpha subunit">
    <location>
        <begin position="1"/>
        <end position="482"/>
    </location>
</feature>
<feature type="binding site" evidence="1">
    <location>
        <position position="327"/>
    </location>
    <ligand>
        <name>L-phenylalanine</name>
        <dbReference type="ChEBI" id="CHEBI:58095"/>
    </ligand>
</feature>
<feature type="binding site" evidence="1">
    <location>
        <begin position="366"/>
        <end position="368"/>
    </location>
    <ligand>
        <name>L-phenylalanine</name>
        <dbReference type="ChEBI" id="CHEBI:58095"/>
    </ligand>
</feature>
<feature type="binding site" evidence="1">
    <location>
        <position position="406"/>
    </location>
    <ligand>
        <name>L-phenylalanine</name>
        <dbReference type="ChEBI" id="CHEBI:58095"/>
    </ligand>
</feature>
<feature type="binding site" evidence="1">
    <location>
        <position position="408"/>
    </location>
    <ligand>
        <name>Mg(2+)</name>
        <dbReference type="ChEBI" id="CHEBI:18420"/>
        <note>shared with beta subunit</note>
    </ligand>
</feature>
<feature type="binding site" evidence="1">
    <location>
        <position position="430"/>
    </location>
    <ligand>
        <name>L-phenylalanine</name>
        <dbReference type="ChEBI" id="CHEBI:58095"/>
    </ligand>
</feature>
<proteinExistence type="inferred from homology"/>
<comment type="catalytic activity">
    <reaction evidence="1">
        <text>tRNA(Phe) + L-phenylalanine + ATP = L-phenylalanyl-tRNA(Phe) + AMP + diphosphate + H(+)</text>
        <dbReference type="Rhea" id="RHEA:19413"/>
        <dbReference type="Rhea" id="RHEA-COMP:9668"/>
        <dbReference type="Rhea" id="RHEA-COMP:9699"/>
        <dbReference type="ChEBI" id="CHEBI:15378"/>
        <dbReference type="ChEBI" id="CHEBI:30616"/>
        <dbReference type="ChEBI" id="CHEBI:33019"/>
        <dbReference type="ChEBI" id="CHEBI:58095"/>
        <dbReference type="ChEBI" id="CHEBI:78442"/>
        <dbReference type="ChEBI" id="CHEBI:78531"/>
        <dbReference type="ChEBI" id="CHEBI:456215"/>
        <dbReference type="EC" id="6.1.1.20"/>
    </reaction>
</comment>
<comment type="cofactor">
    <cofactor evidence="1">
        <name>Mg(2+)</name>
        <dbReference type="ChEBI" id="CHEBI:18420"/>
    </cofactor>
    <text evidence="1">Binds 2 magnesium ions per tetramer.</text>
</comment>
<comment type="subunit">
    <text evidence="1">Tetramer of two alpha and two beta subunits.</text>
</comment>
<comment type="subcellular location">
    <subcellularLocation>
        <location evidence="1">Cytoplasm</location>
    </subcellularLocation>
</comment>
<comment type="similarity">
    <text evidence="1">Belongs to the class-II aminoacyl-tRNA synthetase family. Phe-tRNA synthetase alpha subunit type 2 subfamily.</text>
</comment>
<keyword id="KW-0030">Aminoacyl-tRNA synthetase</keyword>
<keyword id="KW-0067">ATP-binding</keyword>
<keyword id="KW-0963">Cytoplasm</keyword>
<keyword id="KW-0436">Ligase</keyword>
<keyword id="KW-0460">Magnesium</keyword>
<keyword id="KW-0479">Metal-binding</keyword>
<keyword id="KW-0547">Nucleotide-binding</keyword>
<keyword id="KW-0648">Protein biosynthesis</keyword>
<protein>
    <recommendedName>
        <fullName evidence="1">Phenylalanine--tRNA ligase alpha subunit</fullName>
        <ecNumber evidence="1">6.1.1.20</ecNumber>
    </recommendedName>
    <alternativeName>
        <fullName evidence="1">Phenylalanyl-tRNA synthetase alpha subunit</fullName>
        <shortName evidence="1">PheRS</shortName>
    </alternativeName>
</protein>
<gene>
    <name evidence="1" type="primary">pheS</name>
    <name type="ordered locus">TV1066</name>
    <name type="ORF">TVG1092683</name>
</gene>
<organism>
    <name type="scientific">Thermoplasma volcanium (strain ATCC 51530 / DSM 4299 / JCM 9571 / NBRC 15438 / GSS1)</name>
    <dbReference type="NCBI Taxonomy" id="273116"/>
    <lineage>
        <taxon>Archaea</taxon>
        <taxon>Methanobacteriati</taxon>
        <taxon>Thermoplasmatota</taxon>
        <taxon>Thermoplasmata</taxon>
        <taxon>Thermoplasmatales</taxon>
        <taxon>Thermoplasmataceae</taxon>
        <taxon>Thermoplasma</taxon>
    </lineage>
</organism>
<accession>Q979U4</accession>
<dbReference type="EC" id="6.1.1.20" evidence="1"/>
<dbReference type="EMBL" id="BA000011">
    <property type="protein sequence ID" value="BAB60208.1"/>
    <property type="molecule type" value="Genomic_DNA"/>
</dbReference>
<dbReference type="RefSeq" id="WP_010917295.1">
    <property type="nucleotide sequence ID" value="NC_002689.2"/>
</dbReference>
<dbReference type="SMR" id="Q979U4"/>
<dbReference type="STRING" id="273116.gene:9381861"/>
<dbReference type="PaxDb" id="273116-14325304"/>
<dbReference type="GeneID" id="1441177"/>
<dbReference type="KEGG" id="tvo:TVG1092683"/>
<dbReference type="eggNOG" id="arCOG00410">
    <property type="taxonomic scope" value="Archaea"/>
</dbReference>
<dbReference type="HOGENOM" id="CLU_025086_2_2_2"/>
<dbReference type="OrthoDB" id="372178at2157"/>
<dbReference type="PhylomeDB" id="Q979U4"/>
<dbReference type="Proteomes" id="UP000001017">
    <property type="component" value="Chromosome"/>
</dbReference>
<dbReference type="GO" id="GO:0005737">
    <property type="term" value="C:cytoplasm"/>
    <property type="evidence" value="ECO:0007669"/>
    <property type="project" value="UniProtKB-SubCell"/>
</dbReference>
<dbReference type="GO" id="GO:0005524">
    <property type="term" value="F:ATP binding"/>
    <property type="evidence" value="ECO:0007669"/>
    <property type="project" value="UniProtKB-UniRule"/>
</dbReference>
<dbReference type="GO" id="GO:0000287">
    <property type="term" value="F:magnesium ion binding"/>
    <property type="evidence" value="ECO:0007669"/>
    <property type="project" value="UniProtKB-UniRule"/>
</dbReference>
<dbReference type="GO" id="GO:0004826">
    <property type="term" value="F:phenylalanine-tRNA ligase activity"/>
    <property type="evidence" value="ECO:0007669"/>
    <property type="project" value="UniProtKB-UniRule"/>
</dbReference>
<dbReference type="GO" id="GO:0000049">
    <property type="term" value="F:tRNA binding"/>
    <property type="evidence" value="ECO:0007669"/>
    <property type="project" value="InterPro"/>
</dbReference>
<dbReference type="GO" id="GO:0006432">
    <property type="term" value="P:phenylalanyl-tRNA aminoacylation"/>
    <property type="evidence" value="ECO:0007669"/>
    <property type="project" value="UniProtKB-UniRule"/>
</dbReference>
<dbReference type="CDD" id="cd00496">
    <property type="entry name" value="PheRS_alpha_core"/>
    <property type="match status" value="1"/>
</dbReference>
<dbReference type="Gene3D" id="3.30.930.10">
    <property type="entry name" value="Bira Bifunctional Protein, Domain 2"/>
    <property type="match status" value="1"/>
</dbReference>
<dbReference type="Gene3D" id="1.10.10.10">
    <property type="entry name" value="Winged helix-like DNA-binding domain superfamily/Winged helix DNA-binding domain"/>
    <property type="match status" value="1"/>
</dbReference>
<dbReference type="HAMAP" id="MF_00282">
    <property type="entry name" value="Phe_tRNA_synth_alpha2"/>
    <property type="match status" value="1"/>
</dbReference>
<dbReference type="InterPro" id="IPR006195">
    <property type="entry name" value="aa-tRNA-synth_II"/>
</dbReference>
<dbReference type="InterPro" id="IPR045864">
    <property type="entry name" value="aa-tRNA-synth_II/BPL/LPL"/>
</dbReference>
<dbReference type="InterPro" id="IPR004529">
    <property type="entry name" value="Phe-tRNA-synth_IIc_asu"/>
</dbReference>
<dbReference type="InterPro" id="IPR022917">
    <property type="entry name" value="Phe_tRNA_ligase_alpha_bac/arc"/>
</dbReference>
<dbReference type="InterPro" id="IPR002319">
    <property type="entry name" value="Phenylalanyl-tRNA_Synthase"/>
</dbReference>
<dbReference type="InterPro" id="IPR036388">
    <property type="entry name" value="WH-like_DNA-bd_sf"/>
</dbReference>
<dbReference type="NCBIfam" id="TIGR00468">
    <property type="entry name" value="pheS"/>
    <property type="match status" value="1"/>
</dbReference>
<dbReference type="NCBIfam" id="NF003210">
    <property type="entry name" value="PRK04172.1"/>
    <property type="match status" value="1"/>
</dbReference>
<dbReference type="PANTHER" id="PTHR11538:SF40">
    <property type="entry name" value="PHENYLALANINE--TRNA LIGASE ALPHA SUBUNIT"/>
    <property type="match status" value="1"/>
</dbReference>
<dbReference type="PANTHER" id="PTHR11538">
    <property type="entry name" value="PHENYLALANYL-TRNA SYNTHETASE"/>
    <property type="match status" value="1"/>
</dbReference>
<dbReference type="Pfam" id="PF01409">
    <property type="entry name" value="tRNA-synt_2d"/>
    <property type="match status" value="1"/>
</dbReference>
<dbReference type="SUPFAM" id="SSF55681">
    <property type="entry name" value="Class II aaRS and biotin synthetases"/>
    <property type="match status" value="1"/>
</dbReference>
<dbReference type="PROSITE" id="PS50862">
    <property type="entry name" value="AA_TRNA_LIGASE_II"/>
    <property type="match status" value="1"/>
</dbReference>